<protein>
    <recommendedName>
        <fullName>Bifunctional oligoribonuclease and PAP phosphatase NrnA</fullName>
        <ecNumber>3.1.-.-</ecNumber>
    </recommendedName>
    <alternativeName>
        <fullName>3'(2'),5'-bisphosphate nucleotidase</fullName>
        <ecNumber>3.1.3.7</ecNumber>
    </alternativeName>
    <alternativeName>
        <fullName>3'-phosphoadenosine 5'-phosphate phosphatase</fullName>
        <shortName>PAP phosphatase</shortName>
    </alternativeName>
</protein>
<reference key="1">
    <citation type="submission" date="2004-11" db="EMBL/GenBank/DDBJ databases">
        <title>Complete genome sequence of Thermus thermophilus HB8.</title>
        <authorList>
            <person name="Masui R."/>
            <person name="Kurokawa K."/>
            <person name="Nakagawa N."/>
            <person name="Tokunaga F."/>
            <person name="Koyama Y."/>
            <person name="Shibata T."/>
            <person name="Oshima T."/>
            <person name="Yokoyama S."/>
            <person name="Yasunaga T."/>
            <person name="Kuramitsu S."/>
        </authorList>
    </citation>
    <scope>NUCLEOTIDE SEQUENCE [LARGE SCALE GENOMIC DNA]</scope>
    <source>
        <strain>ATCC 27634 / DSM 579 / HB8</strain>
    </source>
</reference>
<reference key="2">
    <citation type="journal article" date="2011" name="J. Biol. Chem.">
        <title>Role of RecJ-like protein with 5'-3' exonuclease activity in oligo(deoxy)nucleotide degradation.</title>
        <authorList>
            <person name="Wakamatsu T."/>
            <person name="Kim K."/>
            <person name="Uemura Y."/>
            <person name="Nakagawa N."/>
            <person name="Kuramitsu S."/>
            <person name="Masui R."/>
        </authorList>
    </citation>
    <scope>FUNCTION AS AN EXONUCLEASE</scope>
    <scope>FUNCTION AS A PAP PHOSPHATASE</scope>
    <scope>BIOPHYSICOCHEMICAL PROPERTIES</scope>
    <scope>COFACTOR</scope>
    <scope>SUBUNIT</scope>
    <scope>DISRUPTION PHENOTYPE</scope>
    <scope>MUTAGENESIS OF ASP-114</scope>
    <source>
        <strain>ATCC 27634 / DSM 579 / HB8</strain>
    </source>
</reference>
<comment type="function">
    <text evidence="1">Bifunctional enzyme which has both oligoribonuclease and pAp-phosphatase activities. Degrades short RNA and DNA oligonucleotides with a length of up to 33 nucleotides, although the enzyme is most active on shorter substrates, in a 5' to 3' direction. Converts 3'(2')-phosphoadenosine 5'-phosphate (PAP) to AMP, has very low activity on cAMP and cGMP.</text>
</comment>
<comment type="catalytic activity">
    <reaction>
        <text>adenosine 3',5'-bisphosphate + H2O = AMP + phosphate</text>
        <dbReference type="Rhea" id="RHEA:10040"/>
        <dbReference type="ChEBI" id="CHEBI:15377"/>
        <dbReference type="ChEBI" id="CHEBI:43474"/>
        <dbReference type="ChEBI" id="CHEBI:58343"/>
        <dbReference type="ChEBI" id="CHEBI:456215"/>
        <dbReference type="EC" id="3.1.3.7"/>
    </reaction>
</comment>
<comment type="cofactor">
    <cofactor evidence="1">
        <name>Co(2+)</name>
        <dbReference type="ChEBI" id="CHEBI:48828"/>
    </cofactor>
    <cofactor evidence="1">
        <name>Mn(2+)</name>
        <dbReference type="ChEBI" id="CHEBI:29035"/>
    </cofactor>
    <cofactor evidence="1">
        <name>Zn(2+)</name>
        <dbReference type="ChEBI" id="CHEBI:29105"/>
    </cofactor>
    <cofactor evidence="1">
        <name>Mg(2+)</name>
        <dbReference type="ChEBI" id="CHEBI:18420"/>
    </cofactor>
    <text evidence="1">Requires a divalent cation; Co(2+) &gt; Mn(2+) &gt;Zn(2+) &gt; Mg(2+).</text>
</comment>
<comment type="biophysicochemical properties">
    <kinetics>
        <KM evidence="1">65 uM for ssDNA 3-mers</KM>
        <KM evidence="1">280 uM for ssRNA 3-mers</KM>
        <KM evidence="1">120 uM for ssDNA 6-mers</KM>
        <KM evidence="1">270 uM for ssRNA 6-mers</KM>
        <KM evidence="1">68 uM for ssDNA 11-mers</KM>
        <KM evidence="1">450 uM for ssRNA 11-mers</KM>
        <KM evidence="1">78 uM for ssDNA 21-mers</KM>
        <KM evidence="1">470 uM for ssRNA 21-mers</KM>
        <KM evidence="1">18 uM for PAP</KM>
        <text>kcat for ss nucleic acids decreases about 5 orders of magnitude as chain length increases from 3-mers to 21-mers.</text>
    </kinetics>
</comment>
<comment type="subunit">
    <text evidence="1">Oligomeric.</text>
</comment>
<comment type="disruption phenotype">
    <text evidence="1">Reduced growth in minimal medium, possibly also affected in cysteine assimilation.</text>
</comment>
<comment type="similarity">
    <text evidence="2">Belongs to the NrnA oligoribonuclease family.</text>
</comment>
<feature type="chain" id="PRO_0000419755" description="Bifunctional oligoribonuclease and PAP phosphatase NrnA">
    <location>
        <begin position="1"/>
        <end position="324"/>
    </location>
</feature>
<feature type="mutagenesis site" description="Decreased substrate affinity (KM 420 uM) and catalytic activity for a ssDNA 6-mer." evidence="1">
    <original>D</original>
    <variation>A</variation>
    <location>
        <position position="114"/>
    </location>
</feature>
<name>NRNA_THET8</name>
<accession>Q5SM25</accession>
<keyword id="KW-0269">Exonuclease</keyword>
<keyword id="KW-0378">Hydrolase</keyword>
<keyword id="KW-0540">Nuclease</keyword>
<keyword id="KW-1185">Reference proteome</keyword>
<proteinExistence type="evidence at protein level"/>
<gene>
    <name type="primary">nrnA</name>
    <name type="ordered locus">TTHA0118</name>
</gene>
<evidence type="ECO:0000269" key="1">
    <source>
    </source>
</evidence>
<evidence type="ECO:0000305" key="2"/>
<dbReference type="EC" id="3.1.-.-"/>
<dbReference type="EC" id="3.1.3.7"/>
<dbReference type="EMBL" id="AP008226">
    <property type="protein sequence ID" value="BAD69941.1"/>
    <property type="molecule type" value="Genomic_DNA"/>
</dbReference>
<dbReference type="RefSeq" id="WP_011227723.1">
    <property type="nucleotide sequence ID" value="NC_006461.1"/>
</dbReference>
<dbReference type="RefSeq" id="YP_143384.1">
    <property type="nucleotide sequence ID" value="NC_006461.1"/>
</dbReference>
<dbReference type="SMR" id="Q5SM25"/>
<dbReference type="EnsemblBacteria" id="BAD69941">
    <property type="protein sequence ID" value="BAD69941"/>
    <property type="gene ID" value="BAD69941"/>
</dbReference>
<dbReference type="GeneID" id="3169676"/>
<dbReference type="KEGG" id="ttj:TTHA0118"/>
<dbReference type="PATRIC" id="fig|300852.9.peg.116"/>
<dbReference type="eggNOG" id="COG0618">
    <property type="taxonomic scope" value="Bacteria"/>
</dbReference>
<dbReference type="HOGENOM" id="CLU_039720_0_1_0"/>
<dbReference type="PhylomeDB" id="Q5SM25"/>
<dbReference type="SABIO-RK" id="Q5SM25"/>
<dbReference type="Proteomes" id="UP000000532">
    <property type="component" value="Chromosome"/>
</dbReference>
<dbReference type="GO" id="GO:0008441">
    <property type="term" value="F:3'(2'),5'-bisphosphate nucleotidase activity"/>
    <property type="evidence" value="ECO:0007669"/>
    <property type="project" value="UniProtKB-EC"/>
</dbReference>
<dbReference type="GO" id="GO:0004527">
    <property type="term" value="F:exonuclease activity"/>
    <property type="evidence" value="ECO:0007669"/>
    <property type="project" value="UniProtKB-KW"/>
</dbReference>
<dbReference type="GO" id="GO:0003676">
    <property type="term" value="F:nucleic acid binding"/>
    <property type="evidence" value="ECO:0007669"/>
    <property type="project" value="InterPro"/>
</dbReference>
<dbReference type="Gene3D" id="3.10.310.30">
    <property type="match status" value="1"/>
</dbReference>
<dbReference type="Gene3D" id="3.90.1640.10">
    <property type="entry name" value="inorganic pyrophosphatase (n-terminal core)"/>
    <property type="match status" value="1"/>
</dbReference>
<dbReference type="InterPro" id="IPR001667">
    <property type="entry name" value="DDH_dom"/>
</dbReference>
<dbReference type="InterPro" id="IPR038763">
    <property type="entry name" value="DHH_sf"/>
</dbReference>
<dbReference type="InterPro" id="IPR003156">
    <property type="entry name" value="DHHA1_dom"/>
</dbReference>
<dbReference type="InterPro" id="IPR051319">
    <property type="entry name" value="Oligoribo/pAp-PDE_c-di-AMP_PDE"/>
</dbReference>
<dbReference type="PANTHER" id="PTHR47618">
    <property type="entry name" value="BIFUNCTIONAL OLIGORIBONUCLEASE AND PAP PHOSPHATASE NRNA"/>
    <property type="match status" value="1"/>
</dbReference>
<dbReference type="PANTHER" id="PTHR47618:SF1">
    <property type="entry name" value="BIFUNCTIONAL OLIGORIBONUCLEASE AND PAP PHOSPHATASE NRNA"/>
    <property type="match status" value="1"/>
</dbReference>
<dbReference type="Pfam" id="PF01368">
    <property type="entry name" value="DHH"/>
    <property type="match status" value="1"/>
</dbReference>
<dbReference type="Pfam" id="PF02272">
    <property type="entry name" value="DHHA1"/>
    <property type="match status" value="1"/>
</dbReference>
<dbReference type="SUPFAM" id="SSF64182">
    <property type="entry name" value="DHH phosphoesterases"/>
    <property type="match status" value="1"/>
</dbReference>
<sequence>MDGNAPEPRYWEKMRLVAEVLKAVEGPIYIATHVDPDGDAIGSSLGLYRALKALGKEAYWVADPPRFLRFLPKEEEYSDPVEKLPPGATLVALDSAEPSRVVGVPVEGFVINIDHHGTNPRFGHLHVVDPSKAATAQMVKDLIDLLGVEWTAEIATPVLTGILTDTGNFRFANTTPEVLRVAAELLGYGVKLAELTDRLQFRPPSYFRLMGQVLSTVAFHFGGLLVTAHLPEDAGAEEDSDDFVGLIRYVEGSVVSVFLRKREEGVKVSIRSRGGVSAQNIALKLGGGGHVPAAGATLKGLDLDQAYERVLEAVREELTRAGYL</sequence>
<organism>
    <name type="scientific">Thermus thermophilus (strain ATCC 27634 / DSM 579 / HB8)</name>
    <dbReference type="NCBI Taxonomy" id="300852"/>
    <lineage>
        <taxon>Bacteria</taxon>
        <taxon>Thermotogati</taxon>
        <taxon>Deinococcota</taxon>
        <taxon>Deinococci</taxon>
        <taxon>Thermales</taxon>
        <taxon>Thermaceae</taxon>
        <taxon>Thermus</taxon>
    </lineage>
</organism>